<accession>Q3SKM9</accession>
<feature type="chain" id="PRO_1000080215" description="Acyl-[acyl-carrier-protein]--UDP-N-acetylglucosamine O-acyltransferase">
    <location>
        <begin position="1"/>
        <end position="258"/>
    </location>
</feature>
<keyword id="KW-0012">Acyltransferase</keyword>
<keyword id="KW-0963">Cytoplasm</keyword>
<keyword id="KW-0441">Lipid A biosynthesis</keyword>
<keyword id="KW-0444">Lipid biosynthesis</keyword>
<keyword id="KW-0443">Lipid metabolism</keyword>
<keyword id="KW-1185">Reference proteome</keyword>
<keyword id="KW-0677">Repeat</keyword>
<keyword id="KW-0808">Transferase</keyword>
<evidence type="ECO:0000255" key="1">
    <source>
        <dbReference type="HAMAP-Rule" id="MF_00387"/>
    </source>
</evidence>
<name>LPXA_THIDA</name>
<comment type="function">
    <text evidence="1">Involved in the biosynthesis of lipid A, a phosphorylated glycolipid that anchors the lipopolysaccharide to the outer membrane of the cell.</text>
</comment>
<comment type="catalytic activity">
    <reaction evidence="1">
        <text>a (3R)-hydroxyacyl-[ACP] + UDP-N-acetyl-alpha-D-glucosamine = a UDP-3-O-[(3R)-3-hydroxyacyl]-N-acetyl-alpha-D-glucosamine + holo-[ACP]</text>
        <dbReference type="Rhea" id="RHEA:67812"/>
        <dbReference type="Rhea" id="RHEA-COMP:9685"/>
        <dbReference type="Rhea" id="RHEA-COMP:9945"/>
        <dbReference type="ChEBI" id="CHEBI:57705"/>
        <dbReference type="ChEBI" id="CHEBI:64479"/>
        <dbReference type="ChEBI" id="CHEBI:78827"/>
        <dbReference type="ChEBI" id="CHEBI:173225"/>
        <dbReference type="EC" id="2.3.1.129"/>
    </reaction>
</comment>
<comment type="pathway">
    <text evidence="1">Glycolipid biosynthesis; lipid IV(A) biosynthesis; lipid IV(A) from (3R)-3-hydroxytetradecanoyl-[acyl-carrier-protein] and UDP-N-acetyl-alpha-D-glucosamine: step 1/6.</text>
</comment>
<comment type="subunit">
    <text evidence="1">Homotrimer.</text>
</comment>
<comment type="subcellular location">
    <subcellularLocation>
        <location evidence="1">Cytoplasm</location>
    </subcellularLocation>
</comment>
<comment type="similarity">
    <text evidence="1">Belongs to the transferase hexapeptide repeat family. LpxA subfamily.</text>
</comment>
<proteinExistence type="inferred from homology"/>
<reference key="1">
    <citation type="journal article" date="2006" name="J. Bacteriol.">
        <title>The genome sequence of the obligately chemolithoautotrophic, facultatively anaerobic bacterium Thiobacillus denitrificans.</title>
        <authorList>
            <person name="Beller H.R."/>
            <person name="Chain P.S."/>
            <person name="Letain T.E."/>
            <person name="Chakicherla A."/>
            <person name="Larimer F.W."/>
            <person name="Richardson P.M."/>
            <person name="Coleman M.A."/>
            <person name="Wood A.P."/>
            <person name="Kelly D.P."/>
        </authorList>
    </citation>
    <scope>NUCLEOTIDE SEQUENCE [LARGE SCALE GENOMIC DNA]</scope>
    <source>
        <strain>ATCC 25259 / T1</strain>
    </source>
</reference>
<protein>
    <recommendedName>
        <fullName evidence="1">Acyl-[acyl-carrier-protein]--UDP-N-acetylglucosamine O-acyltransferase</fullName>
        <shortName evidence="1">UDP-N-acetylglucosamine acyltransferase</shortName>
        <ecNumber evidence="1">2.3.1.129</ecNumber>
    </recommendedName>
</protein>
<organism>
    <name type="scientific">Thiobacillus denitrificans (strain ATCC 25259 / T1)</name>
    <dbReference type="NCBI Taxonomy" id="292415"/>
    <lineage>
        <taxon>Bacteria</taxon>
        <taxon>Pseudomonadati</taxon>
        <taxon>Pseudomonadota</taxon>
        <taxon>Betaproteobacteria</taxon>
        <taxon>Nitrosomonadales</taxon>
        <taxon>Thiobacillaceae</taxon>
        <taxon>Thiobacillus</taxon>
    </lineage>
</organism>
<sequence>MATIHPTALVAPGARLADDVEIGPYSVIGEHVEIGAGTTVGAHAVLTGHTTIGERNKIFHFVSLGEAPQDKKYAGEPTRLEIGDYNVIREFCTFNIGTVQDRGVTRIGHHNWIMAYVHIAHDCVVGDRTIFANNASLAGHAEVGDWAILGGFTGVHQFCKVGAHVMTGISSVVFKDIPPFVMASGQPAAPHGLNNEGLKRRGFSAEALSALKRAYKILYREGNTLAEAQAKLAPEAAKHAEVQQLLDFLARAERGIIR</sequence>
<dbReference type="EC" id="2.3.1.129" evidence="1"/>
<dbReference type="EMBL" id="CP000116">
    <property type="protein sequence ID" value="AAZ96750.1"/>
    <property type="molecule type" value="Genomic_DNA"/>
</dbReference>
<dbReference type="RefSeq" id="WP_011311309.1">
    <property type="nucleotide sequence ID" value="NC_007404.1"/>
</dbReference>
<dbReference type="SMR" id="Q3SKM9"/>
<dbReference type="STRING" id="292415.Tbd_0797"/>
<dbReference type="KEGG" id="tbd:Tbd_0797"/>
<dbReference type="eggNOG" id="COG1043">
    <property type="taxonomic scope" value="Bacteria"/>
</dbReference>
<dbReference type="HOGENOM" id="CLU_061249_0_0_4"/>
<dbReference type="OrthoDB" id="9807278at2"/>
<dbReference type="UniPathway" id="UPA00359">
    <property type="reaction ID" value="UER00477"/>
</dbReference>
<dbReference type="Proteomes" id="UP000008291">
    <property type="component" value="Chromosome"/>
</dbReference>
<dbReference type="GO" id="GO:0005737">
    <property type="term" value="C:cytoplasm"/>
    <property type="evidence" value="ECO:0007669"/>
    <property type="project" value="UniProtKB-SubCell"/>
</dbReference>
<dbReference type="GO" id="GO:0016020">
    <property type="term" value="C:membrane"/>
    <property type="evidence" value="ECO:0007669"/>
    <property type="project" value="GOC"/>
</dbReference>
<dbReference type="GO" id="GO:0008780">
    <property type="term" value="F:acyl-[acyl-carrier-protein]-UDP-N-acetylglucosamine O-acyltransferase activity"/>
    <property type="evidence" value="ECO:0007669"/>
    <property type="project" value="UniProtKB-UniRule"/>
</dbReference>
<dbReference type="GO" id="GO:0009245">
    <property type="term" value="P:lipid A biosynthetic process"/>
    <property type="evidence" value="ECO:0007669"/>
    <property type="project" value="UniProtKB-UniRule"/>
</dbReference>
<dbReference type="CDD" id="cd03351">
    <property type="entry name" value="LbH_UDP-GlcNAc_AT"/>
    <property type="match status" value="1"/>
</dbReference>
<dbReference type="Gene3D" id="2.160.10.10">
    <property type="entry name" value="Hexapeptide repeat proteins"/>
    <property type="match status" value="1"/>
</dbReference>
<dbReference type="Gene3D" id="1.20.1180.10">
    <property type="entry name" value="Udp N-acetylglucosamine O-acyltransferase, C-terminal domain"/>
    <property type="match status" value="1"/>
</dbReference>
<dbReference type="HAMAP" id="MF_00387">
    <property type="entry name" value="LpxA"/>
    <property type="match status" value="1"/>
</dbReference>
<dbReference type="InterPro" id="IPR029098">
    <property type="entry name" value="Acetyltransf_C"/>
</dbReference>
<dbReference type="InterPro" id="IPR037157">
    <property type="entry name" value="Acetyltransf_C_sf"/>
</dbReference>
<dbReference type="InterPro" id="IPR001451">
    <property type="entry name" value="Hexapep"/>
</dbReference>
<dbReference type="InterPro" id="IPR010137">
    <property type="entry name" value="Lipid_A_LpxA"/>
</dbReference>
<dbReference type="InterPro" id="IPR011004">
    <property type="entry name" value="Trimer_LpxA-like_sf"/>
</dbReference>
<dbReference type="NCBIfam" id="TIGR01852">
    <property type="entry name" value="lipid_A_lpxA"/>
    <property type="match status" value="1"/>
</dbReference>
<dbReference type="NCBIfam" id="NF003657">
    <property type="entry name" value="PRK05289.1"/>
    <property type="match status" value="1"/>
</dbReference>
<dbReference type="PANTHER" id="PTHR43480">
    <property type="entry name" value="ACYL-[ACYL-CARRIER-PROTEIN]--UDP-N-ACETYLGLUCOSAMINE O-ACYLTRANSFERASE"/>
    <property type="match status" value="1"/>
</dbReference>
<dbReference type="PANTHER" id="PTHR43480:SF1">
    <property type="entry name" value="ACYL-[ACYL-CARRIER-PROTEIN]--UDP-N-ACETYLGLUCOSAMINE O-ACYLTRANSFERASE, MITOCHONDRIAL-RELATED"/>
    <property type="match status" value="1"/>
</dbReference>
<dbReference type="Pfam" id="PF13720">
    <property type="entry name" value="Acetyltransf_11"/>
    <property type="match status" value="1"/>
</dbReference>
<dbReference type="Pfam" id="PF00132">
    <property type="entry name" value="Hexapep"/>
    <property type="match status" value="2"/>
</dbReference>
<dbReference type="PIRSF" id="PIRSF000456">
    <property type="entry name" value="UDP-GlcNAc_acltr"/>
    <property type="match status" value="1"/>
</dbReference>
<dbReference type="SUPFAM" id="SSF51161">
    <property type="entry name" value="Trimeric LpxA-like enzymes"/>
    <property type="match status" value="1"/>
</dbReference>
<gene>
    <name evidence="1" type="primary">lpxA</name>
    <name type="ordered locus">Tbd_0797</name>
</gene>